<sequence>GSTGLISFGRT</sequence>
<dbReference type="GO" id="GO:0005576">
    <property type="term" value="C:extracellular region"/>
    <property type="evidence" value="ECO:0007669"/>
    <property type="project" value="UniProtKB-SubCell"/>
</dbReference>
<dbReference type="GO" id="GO:0007218">
    <property type="term" value="P:neuropeptide signaling pathway"/>
    <property type="evidence" value="ECO:0007669"/>
    <property type="project" value="UniProtKB-KW"/>
</dbReference>
<dbReference type="InterPro" id="IPR013231">
    <property type="entry name" value="Periviscerokinin"/>
</dbReference>
<dbReference type="Pfam" id="PF08259">
    <property type="entry name" value="Periviscerokin"/>
    <property type="match status" value="1"/>
</dbReference>
<keyword id="KW-0027">Amidation</keyword>
<keyword id="KW-0903">Direct protein sequencing</keyword>
<keyword id="KW-0527">Neuropeptide</keyword>
<keyword id="KW-0964">Secreted</keyword>
<accession>P84655</accession>
<protein>
    <recommendedName>
        <fullName>Periviscerokinin-1</fullName>
        <shortName>BanRo-PVK-1</shortName>
    </recommendedName>
</protein>
<comment type="function">
    <text evidence="4">Mediates visceral muscle contractile activity (myotropic activity).</text>
</comment>
<comment type="subcellular location">
    <subcellularLocation>
        <location evidence="4">Secreted</location>
    </subcellularLocation>
</comment>
<comment type="tissue specificity">
    <text evidence="3">Expressed in abdominal perisympathetic organs and abdominal ganglia.</text>
</comment>
<comment type="mass spectrometry">
    <text>With amidation.</text>
</comment>
<comment type="similarity">
    <text evidence="1">Belongs to the periviscerokinin family.</text>
</comment>
<name>PVK1_BANRO</name>
<evidence type="ECO:0000255" key="1"/>
<evidence type="ECO:0000269" key="2">
    <source>
    </source>
</evidence>
<evidence type="ECO:0000269" key="3">
    <source ref="2"/>
</evidence>
<evidence type="ECO:0000305" key="4"/>
<feature type="peptide" id="PRO_0000044239" description="Periviscerokinin-1">
    <location>
        <begin position="1"/>
        <end position="11"/>
    </location>
</feature>
<feature type="modified residue" description="Threonine amide" evidence="2 3">
    <location>
        <position position="11"/>
    </location>
</feature>
<proteinExistence type="evidence at protein level"/>
<organism>
    <name type="scientific">Bantua robusta</name>
    <name type="common">African bullet roach</name>
    <dbReference type="NCBI Taxonomy" id="344686"/>
    <lineage>
        <taxon>Eukaryota</taxon>
        <taxon>Metazoa</taxon>
        <taxon>Ecdysozoa</taxon>
        <taxon>Arthropoda</taxon>
        <taxon>Hexapoda</taxon>
        <taxon>Insecta</taxon>
        <taxon>Pterygota</taxon>
        <taxon>Neoptera</taxon>
        <taxon>Polyneoptera</taxon>
        <taxon>Dictyoptera</taxon>
        <taxon>Blattodea</taxon>
        <taxon>Blaberoidea</taxon>
        <taxon>Blaberidae</taxon>
        <taxon>Perisphaerinae</taxon>
        <taxon>Bantua</taxon>
    </lineage>
</organism>
<reference key="1">
    <citation type="journal article" date="2009" name="BMC Evol. Biol.">
        <title>A proteomic approach for studying insect phylogeny: CAPA peptides of ancient insect taxa (Dictyoptera, Blattoptera) as a test case.</title>
        <authorList>
            <person name="Roth S."/>
            <person name="Fromm B."/>
            <person name="Gaede G."/>
            <person name="Predel R."/>
        </authorList>
    </citation>
    <scope>PROTEIN SEQUENCE</scope>
    <scope>AMIDATION AT THR-11</scope>
    <source>
        <tissue>Abdominal perisympathetic organs</tissue>
    </source>
</reference>
<reference evidence="4" key="2">
    <citation type="submission" date="2005-09" db="UniProtKB">
        <authorList>
            <person name="Predel R."/>
        </authorList>
    </citation>
    <scope>PROTEIN SEQUENCE</scope>
    <scope>TISSUE SPECIFICITY</scope>
    <scope>MASS SPECTROMETRY</scope>
    <scope>AMIDATION AT THR-11</scope>
    <source>
        <tissue>Abdominal perisympathetic organs</tissue>
    </source>
</reference>